<proteinExistence type="inferred from homology"/>
<feature type="chain" id="PRO_1000200184" description="Protein RnfH">
    <location>
        <begin position="1"/>
        <end position="96"/>
    </location>
</feature>
<sequence length="96" mass="10819">MPGKIAVEVAYALPEKQYLQRVSLQEGATVEEAIRASGLLELRTDIDLTKNKVGIYSRPTKLSDTVHDGDRVEIYRPLIADPKELRRQRAEKSANK</sequence>
<comment type="similarity">
    <text evidence="1">Belongs to the UPF0125 (RnfH) family.</text>
</comment>
<reference key="1">
    <citation type="journal article" date="2009" name="PLoS Genet.">
        <title>Organised genome dynamics in the Escherichia coli species results in highly diverse adaptive paths.</title>
        <authorList>
            <person name="Touchon M."/>
            <person name="Hoede C."/>
            <person name="Tenaillon O."/>
            <person name="Barbe V."/>
            <person name="Baeriswyl S."/>
            <person name="Bidet P."/>
            <person name="Bingen E."/>
            <person name="Bonacorsi S."/>
            <person name="Bouchier C."/>
            <person name="Bouvet O."/>
            <person name="Calteau A."/>
            <person name="Chiapello H."/>
            <person name="Clermont O."/>
            <person name="Cruveiller S."/>
            <person name="Danchin A."/>
            <person name="Diard M."/>
            <person name="Dossat C."/>
            <person name="Karoui M.E."/>
            <person name="Frapy E."/>
            <person name="Garry L."/>
            <person name="Ghigo J.M."/>
            <person name="Gilles A.M."/>
            <person name="Johnson J."/>
            <person name="Le Bouguenec C."/>
            <person name="Lescat M."/>
            <person name="Mangenot S."/>
            <person name="Martinez-Jehanne V."/>
            <person name="Matic I."/>
            <person name="Nassif X."/>
            <person name="Oztas S."/>
            <person name="Petit M.A."/>
            <person name="Pichon C."/>
            <person name="Rouy Z."/>
            <person name="Ruf C.S."/>
            <person name="Schneider D."/>
            <person name="Tourret J."/>
            <person name="Vacherie B."/>
            <person name="Vallenet D."/>
            <person name="Medigue C."/>
            <person name="Rocha E.P.C."/>
            <person name="Denamur E."/>
        </authorList>
    </citation>
    <scope>NUCLEOTIDE SEQUENCE [LARGE SCALE GENOMIC DNA]</scope>
    <source>
        <strain>ATCC 35469 / DSM 13698 / BCRC 15582 / CCUG 18766 / IAM 14443 / JCM 21226 / LMG 7866 / NBRC 102419 / NCTC 12128 / CDC 0568-73</strain>
    </source>
</reference>
<gene>
    <name evidence="1" type="primary">rnfH</name>
    <name type="ordered locus">EFER_0455</name>
</gene>
<dbReference type="EMBL" id="CU928158">
    <property type="protein sequence ID" value="CAQ88014.1"/>
    <property type="molecule type" value="Genomic_DNA"/>
</dbReference>
<dbReference type="RefSeq" id="WP_001117830.1">
    <property type="nucleotide sequence ID" value="NC_011740.1"/>
</dbReference>
<dbReference type="SMR" id="B7LUV6"/>
<dbReference type="KEGG" id="efe:EFER_0455"/>
<dbReference type="HOGENOM" id="CLU_150721_1_0_6"/>
<dbReference type="OrthoDB" id="9796575at2"/>
<dbReference type="Proteomes" id="UP000000745">
    <property type="component" value="Chromosome"/>
</dbReference>
<dbReference type="Gene3D" id="3.10.20.280">
    <property type="entry name" value="RnfH-like"/>
    <property type="match status" value="1"/>
</dbReference>
<dbReference type="HAMAP" id="MF_00460">
    <property type="entry name" value="UPF0125_RnfH"/>
    <property type="match status" value="1"/>
</dbReference>
<dbReference type="InterPro" id="IPR016155">
    <property type="entry name" value="Mopterin_synth/thiamin_S_b"/>
</dbReference>
<dbReference type="InterPro" id="IPR005346">
    <property type="entry name" value="RnfH"/>
</dbReference>
<dbReference type="InterPro" id="IPR037021">
    <property type="entry name" value="RnfH_sf"/>
</dbReference>
<dbReference type="NCBIfam" id="NF002490">
    <property type="entry name" value="PRK01777.1"/>
    <property type="match status" value="1"/>
</dbReference>
<dbReference type="PANTHER" id="PTHR37483">
    <property type="entry name" value="UPF0125 PROTEIN RATB"/>
    <property type="match status" value="1"/>
</dbReference>
<dbReference type="PANTHER" id="PTHR37483:SF1">
    <property type="entry name" value="UPF0125 PROTEIN RATB"/>
    <property type="match status" value="1"/>
</dbReference>
<dbReference type="Pfam" id="PF03658">
    <property type="entry name" value="Ub-RnfH"/>
    <property type="match status" value="1"/>
</dbReference>
<dbReference type="SUPFAM" id="SSF54285">
    <property type="entry name" value="MoaD/ThiS"/>
    <property type="match status" value="1"/>
</dbReference>
<evidence type="ECO:0000255" key="1">
    <source>
        <dbReference type="HAMAP-Rule" id="MF_00460"/>
    </source>
</evidence>
<name>RNFH_ESCF3</name>
<protein>
    <recommendedName>
        <fullName evidence="1">Protein RnfH</fullName>
    </recommendedName>
</protein>
<organism>
    <name type="scientific">Escherichia fergusonii (strain ATCC 35469 / DSM 13698 / CCUG 18766 / IAM 14443 / JCM 21226 / LMG 7866 / NBRC 102419 / NCTC 12128 / CDC 0568-73)</name>
    <dbReference type="NCBI Taxonomy" id="585054"/>
    <lineage>
        <taxon>Bacteria</taxon>
        <taxon>Pseudomonadati</taxon>
        <taxon>Pseudomonadota</taxon>
        <taxon>Gammaproteobacteria</taxon>
        <taxon>Enterobacterales</taxon>
        <taxon>Enterobacteriaceae</taxon>
        <taxon>Escherichia</taxon>
    </lineage>
</organism>
<accession>B7LUV6</accession>